<proteinExistence type="inferred from homology"/>
<name>MRAY_THEFY</name>
<keyword id="KW-0131">Cell cycle</keyword>
<keyword id="KW-0132">Cell division</keyword>
<keyword id="KW-1003">Cell membrane</keyword>
<keyword id="KW-0133">Cell shape</keyword>
<keyword id="KW-0961">Cell wall biogenesis/degradation</keyword>
<keyword id="KW-0460">Magnesium</keyword>
<keyword id="KW-0472">Membrane</keyword>
<keyword id="KW-0479">Metal-binding</keyword>
<keyword id="KW-0573">Peptidoglycan synthesis</keyword>
<keyword id="KW-0808">Transferase</keyword>
<keyword id="KW-0812">Transmembrane</keyword>
<keyword id="KW-1133">Transmembrane helix</keyword>
<reference key="1">
    <citation type="journal article" date="2007" name="J. Bacteriol.">
        <title>Genome sequence and analysis of the soil cellulolytic actinomycete Thermobifida fusca YX.</title>
        <authorList>
            <person name="Lykidis A."/>
            <person name="Mavromatis K."/>
            <person name="Ivanova N."/>
            <person name="Anderson I."/>
            <person name="Land M."/>
            <person name="DiBartolo G."/>
            <person name="Martinez M."/>
            <person name="Lapidus A."/>
            <person name="Lucas S."/>
            <person name="Copeland A."/>
            <person name="Richardson P."/>
            <person name="Wilson D.B."/>
            <person name="Kyrpides N."/>
        </authorList>
    </citation>
    <scope>NUCLEOTIDE SEQUENCE [LARGE SCALE GENOMIC DNA]</scope>
    <source>
        <strain>YX</strain>
    </source>
</reference>
<evidence type="ECO:0000255" key="1">
    <source>
        <dbReference type="HAMAP-Rule" id="MF_00038"/>
    </source>
</evidence>
<comment type="function">
    <text evidence="1">Catalyzes the initial step of the lipid cycle reactions in the biosynthesis of the cell wall peptidoglycan: transfers peptidoglycan precursor phospho-MurNAc-pentapeptide from UDP-MurNAc-pentapeptide onto the lipid carrier undecaprenyl phosphate, yielding undecaprenyl-pyrophosphoryl-MurNAc-pentapeptide, known as lipid I.</text>
</comment>
<comment type="catalytic activity">
    <reaction evidence="1">
        <text>UDP-N-acetyl-alpha-D-muramoyl-L-alanyl-gamma-D-glutamyl-meso-2,6-diaminopimeloyl-D-alanyl-D-alanine + di-trans,octa-cis-undecaprenyl phosphate = di-trans,octa-cis-undecaprenyl diphospho-N-acetyl-alpha-D-muramoyl-L-alanyl-D-glutamyl-meso-2,6-diaminopimeloyl-D-alanyl-D-alanine + UMP</text>
        <dbReference type="Rhea" id="RHEA:28386"/>
        <dbReference type="ChEBI" id="CHEBI:57865"/>
        <dbReference type="ChEBI" id="CHEBI:60392"/>
        <dbReference type="ChEBI" id="CHEBI:61386"/>
        <dbReference type="ChEBI" id="CHEBI:61387"/>
        <dbReference type="EC" id="2.7.8.13"/>
    </reaction>
</comment>
<comment type="cofactor">
    <cofactor evidence="1">
        <name>Mg(2+)</name>
        <dbReference type="ChEBI" id="CHEBI:18420"/>
    </cofactor>
</comment>
<comment type="pathway">
    <text evidence="1">Cell wall biogenesis; peptidoglycan biosynthesis.</text>
</comment>
<comment type="subcellular location">
    <subcellularLocation>
        <location evidence="1">Cell membrane</location>
        <topology evidence="1">Multi-pass membrane protein</topology>
    </subcellularLocation>
</comment>
<comment type="similarity">
    <text evidence="1">Belongs to the glycosyltransferase 4 family. MraY subfamily.</text>
</comment>
<protein>
    <recommendedName>
        <fullName evidence="1">Phospho-N-acetylmuramoyl-pentapeptide-transferase</fullName>
        <ecNumber evidence="1">2.7.8.13</ecNumber>
    </recommendedName>
    <alternativeName>
        <fullName evidence="1">UDP-MurNAc-pentapeptide phosphotransferase</fullName>
    </alternativeName>
</protein>
<dbReference type="EC" id="2.7.8.13" evidence="1"/>
<dbReference type="EMBL" id="CP000088">
    <property type="protein sequence ID" value="AAZ55145.1"/>
    <property type="molecule type" value="Genomic_DNA"/>
</dbReference>
<dbReference type="RefSeq" id="WP_011291554.1">
    <property type="nucleotide sequence ID" value="NC_007333.1"/>
</dbReference>
<dbReference type="SMR" id="Q47QX2"/>
<dbReference type="STRING" id="269800.Tfu_1107"/>
<dbReference type="KEGG" id="tfu:Tfu_1107"/>
<dbReference type="eggNOG" id="COG0472">
    <property type="taxonomic scope" value="Bacteria"/>
</dbReference>
<dbReference type="HOGENOM" id="CLU_023982_0_1_11"/>
<dbReference type="OrthoDB" id="9805475at2"/>
<dbReference type="UniPathway" id="UPA00219"/>
<dbReference type="GO" id="GO:0005886">
    <property type="term" value="C:plasma membrane"/>
    <property type="evidence" value="ECO:0007669"/>
    <property type="project" value="UniProtKB-SubCell"/>
</dbReference>
<dbReference type="GO" id="GO:0046872">
    <property type="term" value="F:metal ion binding"/>
    <property type="evidence" value="ECO:0007669"/>
    <property type="project" value="UniProtKB-KW"/>
</dbReference>
<dbReference type="GO" id="GO:0008963">
    <property type="term" value="F:phospho-N-acetylmuramoyl-pentapeptide-transferase activity"/>
    <property type="evidence" value="ECO:0007669"/>
    <property type="project" value="UniProtKB-UniRule"/>
</dbReference>
<dbReference type="GO" id="GO:0051992">
    <property type="term" value="F:UDP-N-acetylmuramoyl-L-alanyl-D-glutamyl-meso-2,6-diaminopimelyl-D-alanyl-D-alanine:undecaprenyl-phosphate transferase activity"/>
    <property type="evidence" value="ECO:0007669"/>
    <property type="project" value="RHEA"/>
</dbReference>
<dbReference type="GO" id="GO:0051301">
    <property type="term" value="P:cell division"/>
    <property type="evidence" value="ECO:0007669"/>
    <property type="project" value="UniProtKB-KW"/>
</dbReference>
<dbReference type="GO" id="GO:0071555">
    <property type="term" value="P:cell wall organization"/>
    <property type="evidence" value="ECO:0007669"/>
    <property type="project" value="UniProtKB-KW"/>
</dbReference>
<dbReference type="GO" id="GO:0009252">
    <property type="term" value="P:peptidoglycan biosynthetic process"/>
    <property type="evidence" value="ECO:0007669"/>
    <property type="project" value="UniProtKB-UniRule"/>
</dbReference>
<dbReference type="GO" id="GO:0008360">
    <property type="term" value="P:regulation of cell shape"/>
    <property type="evidence" value="ECO:0007669"/>
    <property type="project" value="UniProtKB-KW"/>
</dbReference>
<dbReference type="CDD" id="cd06852">
    <property type="entry name" value="GT_MraY"/>
    <property type="match status" value="1"/>
</dbReference>
<dbReference type="HAMAP" id="MF_00038">
    <property type="entry name" value="MraY"/>
    <property type="match status" value="1"/>
</dbReference>
<dbReference type="InterPro" id="IPR000715">
    <property type="entry name" value="Glycosyl_transferase_4"/>
</dbReference>
<dbReference type="InterPro" id="IPR003524">
    <property type="entry name" value="PNAcMuramoyl-5peptid_Trfase"/>
</dbReference>
<dbReference type="InterPro" id="IPR018480">
    <property type="entry name" value="PNAcMuramoyl-5peptid_Trfase_CS"/>
</dbReference>
<dbReference type="NCBIfam" id="TIGR00445">
    <property type="entry name" value="mraY"/>
    <property type="match status" value="1"/>
</dbReference>
<dbReference type="PANTHER" id="PTHR22926">
    <property type="entry name" value="PHOSPHO-N-ACETYLMURAMOYL-PENTAPEPTIDE-TRANSFERASE"/>
    <property type="match status" value="1"/>
</dbReference>
<dbReference type="PANTHER" id="PTHR22926:SF5">
    <property type="entry name" value="PHOSPHO-N-ACETYLMURAMOYL-PENTAPEPTIDE-TRANSFERASE HOMOLOG"/>
    <property type="match status" value="1"/>
</dbReference>
<dbReference type="Pfam" id="PF00953">
    <property type="entry name" value="Glycos_transf_4"/>
    <property type="match status" value="1"/>
</dbReference>
<dbReference type="Pfam" id="PF10555">
    <property type="entry name" value="MraY_sig1"/>
    <property type="match status" value="1"/>
</dbReference>
<dbReference type="PROSITE" id="PS01347">
    <property type="entry name" value="MRAY_1"/>
    <property type="match status" value="1"/>
</dbReference>
<dbReference type="PROSITE" id="PS01348">
    <property type="entry name" value="MRAY_2"/>
    <property type="match status" value="1"/>
</dbReference>
<sequence>MTGIIAAAGISLLVSFLLLPPLIRILYRFKFGQEIRDDGPQGHKTKQGTPTMGGIAIIFGTVVGYFGAHAVTMTPPTVSGVLVILLFVGLGCVGFLDDFIKIYKRRSLGLRSGAKMLGQIIVGVGFAIGVTMFPNSYTYTPGSTHLSLLRDFGPPMAVWLFVIWALLLIVATSNAVNLTDGLDGLATGATILSLVAYVIIGNWQLRQSCINALEPNCYTVRDPLDLAVVAAAALGGCIAFLWFNAPPAKIFMGDTGSLALGGLLVGLAITTRTQLLLLVIGGLFVLITASVIIQVGSFRLTGKRVFRMAPLQHHFELKGWAETTIVIRFWIIQGLFVAAAMALFYLEWMPR</sequence>
<organism>
    <name type="scientific">Thermobifida fusca (strain YX)</name>
    <dbReference type="NCBI Taxonomy" id="269800"/>
    <lineage>
        <taxon>Bacteria</taxon>
        <taxon>Bacillati</taxon>
        <taxon>Actinomycetota</taxon>
        <taxon>Actinomycetes</taxon>
        <taxon>Streptosporangiales</taxon>
        <taxon>Nocardiopsidaceae</taxon>
        <taxon>Thermobifida</taxon>
    </lineage>
</organism>
<accession>Q47QX2</accession>
<gene>
    <name evidence="1" type="primary">mraY</name>
    <name type="ordered locus">Tfu_1107</name>
</gene>
<feature type="chain" id="PRO_0000235496" description="Phospho-N-acetylmuramoyl-pentapeptide-transferase">
    <location>
        <begin position="1"/>
        <end position="351"/>
    </location>
</feature>
<feature type="transmembrane region" description="Helical" evidence="1">
    <location>
        <begin position="3"/>
        <end position="23"/>
    </location>
</feature>
<feature type="transmembrane region" description="Helical" evidence="1">
    <location>
        <begin position="51"/>
        <end position="71"/>
    </location>
</feature>
<feature type="transmembrane region" description="Helical" evidence="1">
    <location>
        <begin position="76"/>
        <end position="96"/>
    </location>
</feature>
<feature type="transmembrane region" description="Helical" evidence="1">
    <location>
        <begin position="113"/>
        <end position="133"/>
    </location>
</feature>
<feature type="transmembrane region" description="Helical" evidence="1">
    <location>
        <begin position="152"/>
        <end position="172"/>
    </location>
</feature>
<feature type="transmembrane region" description="Helical" evidence="1">
    <location>
        <begin position="181"/>
        <end position="201"/>
    </location>
</feature>
<feature type="transmembrane region" description="Helical" evidence="1">
    <location>
        <begin position="223"/>
        <end position="243"/>
    </location>
</feature>
<feature type="transmembrane region" description="Helical" evidence="1">
    <location>
        <begin position="250"/>
        <end position="270"/>
    </location>
</feature>
<feature type="transmembrane region" description="Helical" evidence="1">
    <location>
        <begin position="275"/>
        <end position="295"/>
    </location>
</feature>
<feature type="transmembrane region" description="Helical" evidence="1">
    <location>
        <begin position="329"/>
        <end position="349"/>
    </location>
</feature>